<keyword id="KW-0150">Chloroplast</keyword>
<keyword id="KW-0489">Methyltransferase</keyword>
<keyword id="KW-0934">Plastid</keyword>
<keyword id="KW-1185">Reference proteome</keyword>
<keyword id="KW-0949">S-adenosyl-L-methionine</keyword>
<keyword id="KW-0808">Transferase</keyword>
<keyword id="KW-0809">Transit peptide</keyword>
<reference key="1">
    <citation type="journal article" date="1996" name="Plant Mol. Biol.">
        <title>Organization and characterization of the ribulose-1,5-bisphosphate carboxylase/oxygenase large subunit epsilon N-methyltransferase gene in tobacco.</title>
        <authorList>
            <person name="Ying Z."/>
            <person name="Janney N."/>
            <person name="Houtz R.L."/>
        </authorList>
    </citation>
    <scope>NUCLEOTIDE SEQUENCE [GENOMIC DNA / MRNA]</scope>
    <source>
        <strain>cv. KY14</strain>
    </source>
</reference>
<organism>
    <name type="scientific">Nicotiana tabacum</name>
    <name type="common">Common tobacco</name>
    <dbReference type="NCBI Taxonomy" id="4097"/>
    <lineage>
        <taxon>Eukaryota</taxon>
        <taxon>Viridiplantae</taxon>
        <taxon>Streptophyta</taxon>
        <taxon>Embryophyta</taxon>
        <taxon>Tracheophyta</taxon>
        <taxon>Spermatophyta</taxon>
        <taxon>Magnoliopsida</taxon>
        <taxon>eudicotyledons</taxon>
        <taxon>Gunneridae</taxon>
        <taxon>Pentapetalae</taxon>
        <taxon>asterids</taxon>
        <taxon>lamiids</taxon>
        <taxon>Solanales</taxon>
        <taxon>Solanaceae</taxon>
        <taxon>Nicotianoideae</taxon>
        <taxon>Nicotianeae</taxon>
        <taxon>Nicotiana</taxon>
    </lineage>
</organism>
<gene>
    <name type="primary">RBCMT</name>
</gene>
<proteinExistence type="evidence at transcript level"/>
<name>RBCMT_TOBAC</name>
<comment type="function">
    <text>Methylates 'Lys-14' of the large subunit of RuBisCO.</text>
</comment>
<comment type="catalytic activity">
    <reaction>
        <text>L-lysyl-[ribulose-1,5-bisphosphate carboxylase] + 3 S-adenosyl-L-methionine = N(6),N(6),N(6)-trimethyl-L-lysyl-[ribulose-1,5-bisphosphate carboxylase] + 3 S-adenosyl-L-homocysteine + 3 H(+)</text>
        <dbReference type="Rhea" id="RHEA:50996"/>
        <dbReference type="Rhea" id="RHEA-COMP:12858"/>
        <dbReference type="Rhea" id="RHEA-COMP:12859"/>
        <dbReference type="ChEBI" id="CHEBI:15378"/>
        <dbReference type="ChEBI" id="CHEBI:29969"/>
        <dbReference type="ChEBI" id="CHEBI:57856"/>
        <dbReference type="ChEBI" id="CHEBI:59789"/>
        <dbReference type="ChEBI" id="CHEBI:61961"/>
        <dbReference type="EC" id="2.1.1.127"/>
    </reaction>
</comment>
<comment type="subcellular location">
    <subcellularLocation>
        <location>Plastid</location>
        <location>Chloroplast</location>
    </subcellularLocation>
</comment>
<comment type="similarity">
    <text evidence="2">Belongs to the class V-like SAM-binding methyltransferase superfamily. Plant protein-lysine LSMT methyltransferase family.</text>
</comment>
<evidence type="ECO:0000255" key="1">
    <source>
        <dbReference type="PROSITE-ProRule" id="PRU00190"/>
    </source>
</evidence>
<evidence type="ECO:0000255" key="2">
    <source>
        <dbReference type="PROSITE-ProRule" id="PRU00916"/>
    </source>
</evidence>
<dbReference type="EC" id="2.1.1.127"/>
<dbReference type="EMBL" id="U35620">
    <property type="protein sequence ID" value="AAC49566.1"/>
    <property type="molecule type" value="mRNA"/>
</dbReference>
<dbReference type="EMBL" id="U35619">
    <property type="protein sequence ID" value="AAC49565.1"/>
    <property type="molecule type" value="Genomic_DNA"/>
</dbReference>
<dbReference type="PIR" id="T03759">
    <property type="entry name" value="T03759"/>
</dbReference>
<dbReference type="RefSeq" id="NP_001312185.1">
    <property type="nucleotide sequence ID" value="NM_001325256.1"/>
</dbReference>
<dbReference type="SMR" id="P94026"/>
<dbReference type="STRING" id="4097.P94026"/>
<dbReference type="PaxDb" id="4097-P94026"/>
<dbReference type="GeneID" id="107778201"/>
<dbReference type="KEGG" id="ag:AAC49566"/>
<dbReference type="KEGG" id="nta:107778201"/>
<dbReference type="OMA" id="ENEADCC"/>
<dbReference type="OrthoDB" id="441812at2759"/>
<dbReference type="Proteomes" id="UP000084051">
    <property type="component" value="Unplaced"/>
</dbReference>
<dbReference type="GO" id="GO:0009507">
    <property type="term" value="C:chloroplast"/>
    <property type="evidence" value="ECO:0007669"/>
    <property type="project" value="UniProtKB-SubCell"/>
</dbReference>
<dbReference type="GO" id="GO:0030785">
    <property type="term" value="F:[ribulose-bisphosphate carboxylase]-lysine N-methyltransferase activity"/>
    <property type="evidence" value="ECO:0007669"/>
    <property type="project" value="UniProtKB-EC"/>
</dbReference>
<dbReference type="GO" id="GO:0016279">
    <property type="term" value="F:protein-lysine N-methyltransferase activity"/>
    <property type="evidence" value="ECO:0000318"/>
    <property type="project" value="GO_Central"/>
</dbReference>
<dbReference type="GO" id="GO:0032259">
    <property type="term" value="P:methylation"/>
    <property type="evidence" value="ECO:0007669"/>
    <property type="project" value="UniProtKB-KW"/>
</dbReference>
<dbReference type="CDD" id="cd19179">
    <property type="entry name" value="SET_RBCMT"/>
    <property type="match status" value="1"/>
</dbReference>
<dbReference type="FunFam" id="3.90.1410.10:FF:000005">
    <property type="entry name" value="Ribulose-1,5 bisphosphate carboxylase/oxygenase large subunit N-methyltransferase, chloroplastic"/>
    <property type="match status" value="1"/>
</dbReference>
<dbReference type="FunFam" id="3.90.1420.10:FF:000004">
    <property type="entry name" value="Ribulose-1,5 bisphosphate carboxylase/oxygenase large subunit N-methyltransferase, chloroplastic"/>
    <property type="match status" value="1"/>
</dbReference>
<dbReference type="Gene3D" id="3.90.1420.10">
    <property type="entry name" value="Rubisco LSMT, substrate-binding domain"/>
    <property type="match status" value="1"/>
</dbReference>
<dbReference type="Gene3D" id="3.90.1410.10">
    <property type="entry name" value="set domain protein methyltransferase, domain 1"/>
    <property type="match status" value="1"/>
</dbReference>
<dbReference type="InterPro" id="IPR011192">
    <property type="entry name" value="Rubisco_LSMT_MeTrfase_plant"/>
</dbReference>
<dbReference type="InterPro" id="IPR015353">
    <property type="entry name" value="Rubisco_LSMT_subst-bd"/>
</dbReference>
<dbReference type="InterPro" id="IPR036464">
    <property type="entry name" value="Rubisco_LSMT_subst-bd_sf"/>
</dbReference>
<dbReference type="InterPro" id="IPR001214">
    <property type="entry name" value="SET_dom"/>
</dbReference>
<dbReference type="InterPro" id="IPR046341">
    <property type="entry name" value="SET_dom_sf"/>
</dbReference>
<dbReference type="InterPro" id="IPR044431">
    <property type="entry name" value="SET_RBCMT"/>
</dbReference>
<dbReference type="InterPro" id="IPR050600">
    <property type="entry name" value="SETD3_SETD6_MTase"/>
</dbReference>
<dbReference type="PANTHER" id="PTHR13271:SF113">
    <property type="entry name" value="[FRUCTOSE-BISPHOSPHATE ALDOLASE]-LYSINE N-METHYLTRANSFERASE, CHLOROPLASTIC"/>
    <property type="match status" value="1"/>
</dbReference>
<dbReference type="PANTHER" id="PTHR13271">
    <property type="entry name" value="UNCHARACTERIZED PUTATIVE METHYLTRANSFERASE"/>
    <property type="match status" value="1"/>
</dbReference>
<dbReference type="Pfam" id="PF09273">
    <property type="entry name" value="Rubis-subs-bind"/>
    <property type="match status" value="1"/>
</dbReference>
<dbReference type="PIRSF" id="PIRSF009328">
    <property type="entry name" value="RMT_SET"/>
    <property type="match status" value="1"/>
</dbReference>
<dbReference type="SMART" id="SM00317">
    <property type="entry name" value="SET"/>
    <property type="match status" value="1"/>
</dbReference>
<dbReference type="SUPFAM" id="SSF81822">
    <property type="entry name" value="RuBisCo LSMT C-terminal, substrate-binding domain"/>
    <property type="match status" value="1"/>
</dbReference>
<dbReference type="SUPFAM" id="SSF82199">
    <property type="entry name" value="SET domain"/>
    <property type="match status" value="1"/>
</dbReference>
<dbReference type="PROSITE" id="PS51583">
    <property type="entry name" value="SAM_MT127"/>
    <property type="match status" value="1"/>
</dbReference>
<dbReference type="PROSITE" id="PS50280">
    <property type="entry name" value="SET"/>
    <property type="match status" value="1"/>
</dbReference>
<protein>
    <recommendedName>
        <fullName>Ribulose-1,5 bisphosphate carboxylase/oxygenase large subunit N-methyltransferase, chloroplastic</fullName>
        <ecNumber>2.1.1.127</ecNumber>
    </recommendedName>
    <alternativeName>
        <fullName>[Ribulose-bisphosphate carboxylase]-lysine N-methyltransferase</fullName>
        <shortName>RuBisCO LSMT</shortName>
        <shortName>RuBisCO methyltransferase</shortName>
        <shortName>rbcMT</shortName>
    </alternativeName>
</protein>
<feature type="transit peptide" description="Chloroplast">
    <location>
        <begin position="1"/>
        <end status="unknown"/>
    </location>
</feature>
<feature type="chain" id="PRO_0000022200" description="Ribulose-1,5 bisphosphate carboxylase/oxygenase large subunit N-methyltransferase, chloroplastic">
    <location>
        <begin status="unknown"/>
        <end position="491"/>
    </location>
</feature>
<feature type="domain" description="SET" evidence="1">
    <location>
        <begin position="67"/>
        <end position="291"/>
    </location>
</feature>
<accession>P94026</accession>
<sequence>MASVFSVHPLPSSSFLCPLKTTKSRTKHHQTFYTYQKTILINSLQLTELDPKIPQPVQTFWQWLCKEGVVTTKTPVKPGIVPEGLGLVAKRDIAKGETVLQVPKRFWINPDAVAESEIGNVCSGLKPWISVALFLLREKWRDDSKWKYYMDVLPKSTDSTIYWSEEELSEIQGTQLLSTTMSVKDYVQNEFQKVEEEVILRNKQLFPFPITLDDFFWAFGILRSRAFSRLRNQNLILVPFADLTNHNARVTTEDHAHEVRGPAGLFSWDLLFSLRSPLKLKAGDQLFIQYDLNKSNADMALDYGFIEPSSARDAFTLTLEISESDEFYGDKLDIAETNGIGETAYFDIKIGQSLPPTMIPYLRLVALGGTDAFLLESIFRNSVWGHLGLPVSRANEELICKVVRDACKSALSGYHTTIEEDEKLMEEGNLSTRLQIAVGIRLGEKRVLKQIDDIFRERELELDELEYYGERRLKDLGLVGEQGDIIFWEPK</sequence>